<name>CAPZA_NEUCR</name>
<sequence length="273" mass="29997">MASHKEIVSSFVEGAPPGELADVVADIKALTSSTPNLLNELGPAFQKYNEEQFTTVKLPGGSQPVIISSHSSLEDGRYYDVESSSSFAYDHITQKASDVQSHVLEGEQTDLVKSTVKGLSAYVKEHFPNAAYGAYPIENDTKVAVVIVANKYSPNNFWNGRWRSLYIYDPSNNSIEGSIKVDVHYYEDGNVRLLTNKTVTATVSSGTGSGIAKEISVNEKKYQEELNKSFTSLSEGAFKGLRRQLPVTRQKIEWDKVASYRLGQDIGGGSSRR</sequence>
<comment type="function">
    <text evidence="1">F-actin-capping proteins bind in a Ca(2+)-independent manner to the fast growing ends of actin filaments (barbed end) thereby blocking the exchange of subunits at these ends. Unlike other capping proteins (such as gelsolin and severin), these proteins do not sever actin filaments (By similarity).</text>
</comment>
<comment type="subunit">
    <text evidence="2">Component of the F-actin capping complex, composed of a heterodimer of an alpha and a beta subunit.</text>
</comment>
<comment type="subcellular location">
    <subcellularLocation>
        <location evidence="3">Cytoplasm</location>
    </subcellularLocation>
    <subcellularLocation>
        <location evidence="3">Cytoplasm</location>
        <location evidence="3">Cytoskeleton</location>
        <location evidence="3">Actin patch</location>
    </subcellularLocation>
    <subcellularLocation>
        <location evidence="2">Cytoplasm</location>
        <location evidence="2">Cytoskeleton</location>
    </subcellularLocation>
    <text evidence="2">Localizes to the actomyosin contractile ring.</text>
</comment>
<comment type="similarity">
    <text evidence="4">Belongs to the F-actin-capping protein alpha subunit family.</text>
</comment>
<comment type="sequence caution" evidence="4">
    <conflict type="erroneous gene model prediction">
        <sequence resource="EMBL-CDS" id="CAB91688"/>
    </conflict>
</comment>
<feature type="chain" id="PRO_0000208644" description="F-actin-capping protein subunit alpha">
    <location>
        <begin position="1"/>
        <end position="273"/>
    </location>
</feature>
<dbReference type="EMBL" id="AL356172">
    <property type="protein sequence ID" value="CAB91688.2"/>
    <property type="status" value="ALT_SEQ"/>
    <property type="molecule type" value="Genomic_DNA"/>
</dbReference>
<dbReference type="EMBL" id="CM002241">
    <property type="protein sequence ID" value="EAA28314.2"/>
    <property type="molecule type" value="Genomic_DNA"/>
</dbReference>
<dbReference type="RefSeq" id="XP_957550.2">
    <property type="nucleotide sequence ID" value="XM_952457.2"/>
</dbReference>
<dbReference type="SMR" id="Q9P5K9"/>
<dbReference type="FunCoup" id="Q9P5K9">
    <property type="interactions" value="770"/>
</dbReference>
<dbReference type="STRING" id="367110.Q9P5K9"/>
<dbReference type="PaxDb" id="5141-EFNCRP00000003565"/>
<dbReference type="EnsemblFungi" id="EAA28314">
    <property type="protein sequence ID" value="EAA28314"/>
    <property type="gene ID" value="NCU03911"/>
</dbReference>
<dbReference type="GeneID" id="3873735"/>
<dbReference type="KEGG" id="ncr:NCU03911"/>
<dbReference type="VEuPathDB" id="FungiDB:NCU03911"/>
<dbReference type="HOGENOM" id="CLU_045161_0_0_1"/>
<dbReference type="InParanoid" id="Q9P5K9"/>
<dbReference type="OrthoDB" id="340550at2759"/>
<dbReference type="Proteomes" id="UP000001805">
    <property type="component" value="Chromosome 5, Linkage Group VI"/>
</dbReference>
<dbReference type="GO" id="GO:0030479">
    <property type="term" value="C:actin cortical patch"/>
    <property type="evidence" value="ECO:0000318"/>
    <property type="project" value="GO_Central"/>
</dbReference>
<dbReference type="GO" id="GO:0005934">
    <property type="term" value="C:cellular bud tip"/>
    <property type="evidence" value="ECO:0007669"/>
    <property type="project" value="EnsemblFungi"/>
</dbReference>
<dbReference type="GO" id="GO:0030863">
    <property type="term" value="C:cortical cytoskeleton"/>
    <property type="evidence" value="ECO:0000318"/>
    <property type="project" value="GO_Central"/>
</dbReference>
<dbReference type="GO" id="GO:0008290">
    <property type="term" value="C:F-actin capping protein complex"/>
    <property type="evidence" value="ECO:0000318"/>
    <property type="project" value="GO_Central"/>
</dbReference>
<dbReference type="GO" id="GO:0000131">
    <property type="term" value="C:incipient cellular bud site"/>
    <property type="evidence" value="ECO:0007669"/>
    <property type="project" value="EnsemblFungi"/>
</dbReference>
<dbReference type="GO" id="GO:0110085">
    <property type="term" value="C:mitotic actomyosin contractile ring"/>
    <property type="evidence" value="ECO:0007669"/>
    <property type="project" value="EnsemblFungi"/>
</dbReference>
<dbReference type="GO" id="GO:0051015">
    <property type="term" value="F:actin filament binding"/>
    <property type="evidence" value="ECO:0000318"/>
    <property type="project" value="GO_Central"/>
</dbReference>
<dbReference type="GO" id="GO:0044396">
    <property type="term" value="P:actin cortical patch organization"/>
    <property type="evidence" value="ECO:0007669"/>
    <property type="project" value="EnsemblFungi"/>
</dbReference>
<dbReference type="GO" id="GO:0030036">
    <property type="term" value="P:actin cytoskeleton organization"/>
    <property type="evidence" value="ECO:0000318"/>
    <property type="project" value="GO_Central"/>
</dbReference>
<dbReference type="GO" id="GO:0051016">
    <property type="term" value="P:barbed-end actin filament capping"/>
    <property type="evidence" value="ECO:0000318"/>
    <property type="project" value="GO_Central"/>
</dbReference>
<dbReference type="GO" id="GO:1904600">
    <property type="term" value="P:mating projection actin fusion focus assembly"/>
    <property type="evidence" value="ECO:0007669"/>
    <property type="project" value="EnsemblFungi"/>
</dbReference>
<dbReference type="GO" id="GO:1903475">
    <property type="term" value="P:mitotic actomyosin contractile ring assembly"/>
    <property type="evidence" value="ECO:0007669"/>
    <property type="project" value="EnsemblFungi"/>
</dbReference>
<dbReference type="GO" id="GO:1902404">
    <property type="term" value="P:mitotic actomyosin contractile ring contraction"/>
    <property type="evidence" value="ECO:0007669"/>
    <property type="project" value="EnsemblFungi"/>
</dbReference>
<dbReference type="FunFam" id="3.30.1140.60:FF:000004">
    <property type="entry name" value="F-actin-capping protein subunit alpha"/>
    <property type="match status" value="1"/>
</dbReference>
<dbReference type="FunFam" id="3.90.1150.210:FF:000003">
    <property type="entry name" value="F-actin-capping protein subunit alpha"/>
    <property type="match status" value="1"/>
</dbReference>
<dbReference type="Gene3D" id="3.30.1140.60">
    <property type="entry name" value="F-actin capping protein, alpha subunit"/>
    <property type="match status" value="1"/>
</dbReference>
<dbReference type="Gene3D" id="3.90.1150.210">
    <property type="entry name" value="F-actin capping protein, beta subunit"/>
    <property type="match status" value="1"/>
</dbReference>
<dbReference type="InterPro" id="IPR002189">
    <property type="entry name" value="CapZ_alpha"/>
</dbReference>
<dbReference type="InterPro" id="IPR037282">
    <property type="entry name" value="CapZ_alpha/beta"/>
</dbReference>
<dbReference type="InterPro" id="IPR042276">
    <property type="entry name" value="CapZ_alpha/beta_2"/>
</dbReference>
<dbReference type="InterPro" id="IPR042489">
    <property type="entry name" value="CapZ_alpha_1"/>
</dbReference>
<dbReference type="InterPro" id="IPR017865">
    <property type="entry name" value="F-actin_cap_asu_CS"/>
</dbReference>
<dbReference type="PANTHER" id="PTHR10653">
    <property type="entry name" value="F-ACTIN-CAPPING PROTEIN SUBUNIT ALPHA"/>
    <property type="match status" value="1"/>
</dbReference>
<dbReference type="PANTHER" id="PTHR10653:SF0">
    <property type="entry name" value="F-ACTIN-CAPPING PROTEIN SUBUNIT ALPHA"/>
    <property type="match status" value="1"/>
</dbReference>
<dbReference type="Pfam" id="PF01267">
    <property type="entry name" value="F-actin_cap_A"/>
    <property type="match status" value="1"/>
</dbReference>
<dbReference type="PRINTS" id="PR00191">
    <property type="entry name" value="FACTINCAPA"/>
</dbReference>
<dbReference type="SUPFAM" id="SSF90096">
    <property type="entry name" value="Subunits of heterodimeric actin filament capping protein Capz"/>
    <property type="match status" value="1"/>
</dbReference>
<dbReference type="PROSITE" id="PS00748">
    <property type="entry name" value="F_ACTIN_CAPPING_A_1"/>
    <property type="match status" value="1"/>
</dbReference>
<dbReference type="PROSITE" id="PS00749">
    <property type="entry name" value="F_ACTIN_CAPPING_A_2"/>
    <property type="match status" value="1"/>
</dbReference>
<protein>
    <recommendedName>
        <fullName>F-actin-capping protein subunit alpha</fullName>
    </recommendedName>
    <alternativeName>
        <fullName>F-actin capping protein 1</fullName>
    </alternativeName>
</protein>
<reference key="1">
    <citation type="journal article" date="2003" name="Nucleic Acids Res.">
        <title>What's in the genome of a filamentous fungus? Analysis of the Neurospora genome sequence.</title>
        <authorList>
            <person name="Mannhaupt G."/>
            <person name="Montrone C."/>
            <person name="Haase D."/>
            <person name="Mewes H.-W."/>
            <person name="Aign V."/>
            <person name="Hoheisel J.D."/>
            <person name="Fartmann B."/>
            <person name="Nyakatura G."/>
            <person name="Kempken F."/>
            <person name="Maier J."/>
            <person name="Schulte U."/>
        </authorList>
    </citation>
    <scope>NUCLEOTIDE SEQUENCE [LARGE SCALE GENOMIC DNA]</scope>
    <source>
        <strain>ATCC 24698 / 74-OR23-1A / CBS 708.71 / DSM 1257 / FGSC 987</strain>
    </source>
</reference>
<reference key="2">
    <citation type="journal article" date="2003" name="Nature">
        <title>The genome sequence of the filamentous fungus Neurospora crassa.</title>
        <authorList>
            <person name="Galagan J.E."/>
            <person name="Calvo S.E."/>
            <person name="Borkovich K.A."/>
            <person name="Selker E.U."/>
            <person name="Read N.D."/>
            <person name="Jaffe D.B."/>
            <person name="FitzHugh W."/>
            <person name="Ma L.-J."/>
            <person name="Smirnov S."/>
            <person name="Purcell S."/>
            <person name="Rehman B."/>
            <person name="Elkins T."/>
            <person name="Engels R."/>
            <person name="Wang S."/>
            <person name="Nielsen C.B."/>
            <person name="Butler J."/>
            <person name="Endrizzi M."/>
            <person name="Qui D."/>
            <person name="Ianakiev P."/>
            <person name="Bell-Pedersen D."/>
            <person name="Nelson M.A."/>
            <person name="Werner-Washburne M."/>
            <person name="Selitrennikoff C.P."/>
            <person name="Kinsey J.A."/>
            <person name="Braun E.L."/>
            <person name="Zelter A."/>
            <person name="Schulte U."/>
            <person name="Kothe G.O."/>
            <person name="Jedd G."/>
            <person name="Mewes H.-W."/>
            <person name="Staben C."/>
            <person name="Marcotte E."/>
            <person name="Greenberg D."/>
            <person name="Roy A."/>
            <person name="Foley K."/>
            <person name="Naylor J."/>
            <person name="Stange-Thomann N."/>
            <person name="Barrett R."/>
            <person name="Gnerre S."/>
            <person name="Kamal M."/>
            <person name="Kamvysselis M."/>
            <person name="Mauceli E.W."/>
            <person name="Bielke C."/>
            <person name="Rudd S."/>
            <person name="Frishman D."/>
            <person name="Krystofova S."/>
            <person name="Rasmussen C."/>
            <person name="Metzenberg R.L."/>
            <person name="Perkins D.D."/>
            <person name="Kroken S."/>
            <person name="Cogoni C."/>
            <person name="Macino G."/>
            <person name="Catcheside D.E.A."/>
            <person name="Li W."/>
            <person name="Pratt R.J."/>
            <person name="Osmani S.A."/>
            <person name="DeSouza C.P.C."/>
            <person name="Glass N.L."/>
            <person name="Orbach M.J."/>
            <person name="Berglund J.A."/>
            <person name="Voelker R."/>
            <person name="Yarden O."/>
            <person name="Plamann M."/>
            <person name="Seiler S."/>
            <person name="Dunlap J.C."/>
            <person name="Radford A."/>
            <person name="Aramayo R."/>
            <person name="Natvig D.O."/>
            <person name="Alex L.A."/>
            <person name="Mannhaupt G."/>
            <person name="Ebbole D.J."/>
            <person name="Freitag M."/>
            <person name="Paulsen I."/>
            <person name="Sachs M.S."/>
            <person name="Lander E.S."/>
            <person name="Nusbaum C."/>
            <person name="Birren B.W."/>
        </authorList>
    </citation>
    <scope>NUCLEOTIDE SEQUENCE [LARGE SCALE GENOMIC DNA]</scope>
    <source>
        <strain>ATCC 24698 / 74-OR23-1A / CBS 708.71 / DSM 1257 / FGSC 987</strain>
    </source>
</reference>
<evidence type="ECO:0000250" key="1"/>
<evidence type="ECO:0000250" key="2">
    <source>
        <dbReference type="UniProtKB" id="P28495"/>
    </source>
</evidence>
<evidence type="ECO:0000250" key="3">
    <source>
        <dbReference type="UniProtKB" id="Q10434"/>
    </source>
</evidence>
<evidence type="ECO:0000305" key="4"/>
<organism>
    <name type="scientific">Neurospora crassa (strain ATCC 24698 / 74-OR23-1A / CBS 708.71 / DSM 1257 / FGSC 987)</name>
    <dbReference type="NCBI Taxonomy" id="367110"/>
    <lineage>
        <taxon>Eukaryota</taxon>
        <taxon>Fungi</taxon>
        <taxon>Dikarya</taxon>
        <taxon>Ascomycota</taxon>
        <taxon>Pezizomycotina</taxon>
        <taxon>Sordariomycetes</taxon>
        <taxon>Sordariomycetidae</taxon>
        <taxon>Sordariales</taxon>
        <taxon>Sordariaceae</taxon>
        <taxon>Neurospora</taxon>
    </lineage>
</organism>
<keyword id="KW-0117">Actin capping</keyword>
<keyword id="KW-0009">Actin-binding</keyword>
<keyword id="KW-0963">Cytoplasm</keyword>
<keyword id="KW-0206">Cytoskeleton</keyword>
<keyword id="KW-1185">Reference proteome</keyword>
<accession>Q9P5K9</accession>
<accession>Q7RZC7</accession>
<proteinExistence type="inferred from homology"/>
<gene>
    <name type="primary">fac-1</name>
    <name type="synonym">cap1</name>
    <name type="ORF">B23L21.200</name>
    <name type="ORF">NCU03911</name>
</gene>